<protein>
    <recommendedName>
        <fullName evidence="2">Spike glycoprotein</fullName>
        <shortName evidence="2">S glycoprotein</shortName>
    </recommendedName>
    <alternativeName>
        <fullName evidence="2">E2</fullName>
    </alternativeName>
    <alternativeName>
        <fullName evidence="2">Peplomer protein</fullName>
    </alternativeName>
    <component>
        <recommendedName>
            <fullName evidence="2">Spike protein S1</fullName>
        </recommendedName>
    </component>
    <component>
        <recommendedName>
            <fullName evidence="2">Spike protein S2</fullName>
        </recommendedName>
    </component>
    <component>
        <recommendedName>
            <fullName evidence="2">Spike protein S2'</fullName>
        </recommendedName>
    </component>
</protein>
<reference key="1">
    <citation type="journal article" date="1991" name="Virology">
        <title>Comparison of the nucleotide and deduced amino acid sequences of the S genes specified by virulent and avirulent strains of bovine coronaviruses.</title>
        <authorList>
            <person name="Zhang X."/>
            <person name="Kousoulas K.G."/>
            <person name="Storz J."/>
        </authorList>
    </citation>
    <scope>NUCLEOTIDE SEQUENCE [GENOMIC RNA]</scope>
</reference>
<proteinExistence type="inferred from homology"/>
<evidence type="ECO:0000250" key="1"/>
<evidence type="ECO:0000255" key="2">
    <source>
        <dbReference type="HAMAP-Rule" id="MF_04099"/>
    </source>
</evidence>
<evidence type="ECO:0000255" key="3">
    <source>
        <dbReference type="PROSITE-ProRule" id="PRU01269"/>
    </source>
</evidence>
<evidence type="ECO:0000255" key="4">
    <source>
        <dbReference type="PROSITE-ProRule" id="PRU01270"/>
    </source>
</evidence>
<sequence length="1363" mass="150677">MFLILLISLPMALAVIGDLKCTTVSINDVDTGVPSVSTDTVDVTNGLGTYYVLDRVYLNTTLLLNGYYPTSGSTYRNMALKGTLLLSTLWFKPPFLSDFINGIFAKVKNTKVIKNGVMYSEFPAITIGSTFVNTSYSVVVQPHTTNLDNKLQGLLEISVCQYTMCEYPHTICHPNLGNRRIELWHWDTGVVSCLYKRNFTYDVNADYLYFHFYQEGGTFYAYFTDTGVVTKFLFNVYLGTVLSHYYVMPLTCNSAMTLEYWVTPLTSKQYLLAFNQDGVIFNAVDCKSDFMSEIKCKTLSIAPSTGVYELNGYTVQPIADVYRRIPNLPDCNIEAWLNDKSVPSPLNWERKTFSNCNFNMSSLMSFIQADSFTCNNIDAAKIYGMCFSSITIDKFAIPNGRKVDLQLGNLGYLQSFNYRIDTTATSCQLYYNLPAANVSVSRFNPSTWNRRFGFTEQSVFKPQPVGVFTDHDVVYAQHCFKAPTNFCPCKLDGSLCVGSGSGIDAGYKNSGIGTCPAGTNYLTCHNAAQCDCLCTPDPITSKSTGPYKCPQTKYLVGIGEHCSGLAIKSDYCGGNPCTCQPQAFLGWSVDSCLQGDRCNIFANFILHDVNSGTTCSTDLQKSNTDIILGVCVNYDLYGITGQGIFVEVNATYYNSWQNLLYDSNGNLYGFRDYLTNRTFMIRSCYSGRVSAAFHANSSEPALLFRNIKCNYVFNNTLSRQLQPINYFDSYLGCVVNADNSTSSAVQTCDLTVGSGYCVDYSTKRRSRRAITTGYRFTNFEPFTVNSVNDSLEPVGGLYEIQIPSEFTIGNMEEFIQISSPKVTIDCSAFVCGDYAACKSQLVEYGSFCDNINAILTEVNELLDTTQLQVANSLMNGVTLSTKLKDGVNFNVDDINFSPVLGCLGSDCNKVSSRSAIEDLLFSKVKLSDVGFVEAYNNCTGGAEIRDLICVQSYNGIKVLPPLLSENQISGYTLAATSASLFPPWSAAAGVPFYLNVQYRINGIGVTMDVLSQNQKLIANAFNNALDAIQEGFDATNSALVKIQAVVNANAEALNNLLQQLSNRFGAISSSLQEILSRLDALEAQAQIDRLINGRLTALNAYVSQQLSDSTLVKFSAAQAMEKVNECVKSQSSRINFCGNGNHIISLVQNAPYGLYFIHFSYVPTKYVTAKVSPGLCIAGDRGIAPKSGYFVNVNNTWMFTGSGYYYPEPITGNNVVVMSTCAVNYTKAPDVMLNISTPNLPDFKEELDQWFKNQTSVAPDLSLDYINVTFLDLQDEMNRLQEAIKVLNQSYINLKDIGTYEYYVKWPWYVWLLIGLAGVAMLVLLFFICCCTGCGTSCFKKCGGCCDDYTGHQELVIKTSHDD</sequence>
<organismHost>
    <name type="scientific">Bos taurus</name>
    <name type="common">Bovine</name>
    <dbReference type="NCBI Taxonomy" id="9913"/>
</organismHost>
<feature type="signal peptide" evidence="2">
    <location>
        <begin position="1"/>
        <end position="13"/>
    </location>
</feature>
<feature type="chain" id="PRO_0000037190" description="Spike glycoprotein">
    <location>
        <begin position="14"/>
        <end position="1363"/>
    </location>
</feature>
<feature type="chain" id="PRO_0000037191" description="Spike protein S1">
    <location>
        <begin position="14"/>
        <end position="768"/>
    </location>
</feature>
<feature type="chain" id="PRO_0000037192" description="Spike protein S2">
    <location>
        <begin position="769"/>
        <end position="1363"/>
    </location>
</feature>
<feature type="chain" id="PRO_0000444073" description="Spike protein S2'" evidence="2">
    <location>
        <begin position="914"/>
        <end position="1363"/>
    </location>
</feature>
<feature type="topological domain" description="Extracellular" evidence="2">
    <location>
        <begin position="14"/>
        <end position="1307"/>
    </location>
</feature>
<feature type="transmembrane region" description="Helical" evidence="2">
    <location>
        <begin position="1308"/>
        <end position="1328"/>
    </location>
</feature>
<feature type="topological domain" description="Cytoplasmic" evidence="2">
    <location>
        <begin position="1329"/>
        <end position="1363"/>
    </location>
</feature>
<feature type="domain" description="BetaCoV S1-NTD" evidence="4">
    <location>
        <begin position="15"/>
        <end position="298"/>
    </location>
</feature>
<feature type="domain" description="BetaCoV S1-CTD" evidence="3">
    <location>
        <begin position="329"/>
        <end position="617"/>
    </location>
</feature>
<feature type="region of interest" description="Fusion peptide 1" evidence="2">
    <location>
        <begin position="914"/>
        <end position="935"/>
    </location>
</feature>
<feature type="region of interest" description="Fusion peptide 2" evidence="2">
    <location>
        <begin position="933"/>
        <end position="953"/>
    </location>
</feature>
<feature type="region of interest" description="Heptad repeat 1" evidence="2">
    <location>
        <begin position="1014"/>
        <end position="1064"/>
    </location>
</feature>
<feature type="region of interest" description="Heptad repeat 2" evidence="2">
    <location>
        <begin position="1258"/>
        <end position="1296"/>
    </location>
</feature>
<feature type="coiled-coil region" evidence="2">
    <location>
        <begin position="1043"/>
        <end position="1087"/>
    </location>
</feature>
<feature type="coiled-coil region" evidence="2">
    <location>
        <begin position="1269"/>
        <end position="1297"/>
    </location>
</feature>
<feature type="short sequence motif" description="KxHxx" evidence="2">
    <location>
        <begin position="1359"/>
        <end position="1363"/>
    </location>
</feature>
<feature type="site" description="Cleavage; by host" evidence="1">
    <location>
        <begin position="768"/>
        <end position="769"/>
    </location>
</feature>
<feature type="site" description="Cleavage" evidence="2">
    <location>
        <begin position="913"/>
        <end position="914"/>
    </location>
</feature>
<feature type="glycosylation site" description="N-linked (GlcNAc...) asparagine; by host" evidence="2">
    <location>
        <position position="59"/>
    </location>
</feature>
<feature type="glycosylation site" description="N-linked (GlcNAc...) asparagine; by host" evidence="2">
    <location>
        <position position="133"/>
    </location>
</feature>
<feature type="glycosylation site" description="N-linked (GlcNAc...) asparagine; by host" evidence="2">
    <location>
        <position position="198"/>
    </location>
</feature>
<feature type="glycosylation site" description="N-linked (GlcNAc...) asparagine; by host" evidence="2">
    <location>
        <position position="359"/>
    </location>
</feature>
<feature type="glycosylation site" description="N-linked (GlcNAc...) asparagine; by host" evidence="2">
    <location>
        <position position="437"/>
    </location>
</feature>
<feature type="glycosylation site" description="N-linked (GlcNAc...) asparagine; by host" evidence="2">
    <location>
        <position position="649"/>
    </location>
</feature>
<feature type="glycosylation site" description="N-linked (GlcNAc...) asparagine; by host" evidence="2">
    <location>
        <position position="676"/>
    </location>
</feature>
<feature type="glycosylation site" description="N-linked (GlcNAc...) asparagine; by host" evidence="2">
    <location>
        <position position="696"/>
    </location>
</feature>
<feature type="glycosylation site" description="N-linked (GlcNAc...) asparagine; by host" evidence="2">
    <location>
        <position position="714"/>
    </location>
</feature>
<feature type="glycosylation site" description="N-linked (GlcNAc...) asparagine; by host" evidence="2">
    <location>
        <position position="739"/>
    </location>
</feature>
<feature type="glycosylation site" description="N-linked (GlcNAc...) asparagine; by host" evidence="2">
    <location>
        <position position="788"/>
    </location>
</feature>
<feature type="glycosylation site" description="N-linked (GlcNAc...) asparagine; by host" evidence="2">
    <location>
        <position position="937"/>
    </location>
</feature>
<feature type="glycosylation site" description="N-linked (GlcNAc...) asparagine; by host" evidence="2">
    <location>
        <position position="1194"/>
    </location>
</feature>
<feature type="glycosylation site" description="N-linked (GlcNAc...) asparagine; by host" evidence="2">
    <location>
        <position position="1224"/>
    </location>
</feature>
<feature type="glycosylation site" description="N-linked (GlcNAc...) asparagine; by host" evidence="2">
    <location>
        <position position="1234"/>
    </location>
</feature>
<feature type="glycosylation site" description="N-linked (GlcNAc...) asparagine; by host" evidence="2">
    <location>
        <position position="1253"/>
    </location>
</feature>
<feature type="glycosylation site" description="N-linked (GlcNAc...) asparagine; by host" evidence="2">
    <location>
        <position position="1267"/>
    </location>
</feature>
<feature type="glycosylation site" description="N-linked (GlcNAc...) asparagine; by host" evidence="2">
    <location>
        <position position="1288"/>
    </location>
</feature>
<feature type="disulfide bond" evidence="4">
    <location>
        <begin position="21"/>
        <end position="165"/>
    </location>
</feature>
<feature type="disulfide bond" evidence="4">
    <location>
        <begin position="160"/>
        <end position="193"/>
    </location>
</feature>
<feature type="disulfide bond" evidence="4">
    <location>
        <begin position="172"/>
        <end position="252"/>
    </location>
</feature>
<feature type="disulfide bond" evidence="4">
    <location>
        <begin position="286"/>
        <end position="296"/>
    </location>
</feature>
<feature type="disulfide bond" evidence="3">
    <location>
        <begin position="331"/>
        <end position="356"/>
    </location>
</feature>
<feature type="disulfide bond" evidence="3">
    <location>
        <begin position="374"/>
        <end position="427"/>
    </location>
</feature>
<feature type="disulfide bond" evidence="3">
    <location>
        <begin position="386"/>
        <end position="615"/>
    </location>
</feature>
<feature type="disulfide bond" evidence="2">
    <location>
        <begin position="938"/>
        <end position="949"/>
    </location>
</feature>
<gene>
    <name evidence="2" type="primary">S</name>
    <name type="ORF">3</name>
</gene>
<name>SPIKE_CVBLY</name>
<keyword id="KW-0175">Coiled coil</keyword>
<keyword id="KW-1015">Disulfide bond</keyword>
<keyword id="KW-1170">Fusion of virus membrane with host endosomal membrane</keyword>
<keyword id="KW-1168">Fusion of virus membrane with host membrane</keyword>
<keyword id="KW-0325">Glycoprotein</keyword>
<keyword id="KW-1032">Host cell membrane</keyword>
<keyword id="KW-1043">Host membrane</keyword>
<keyword id="KW-0945">Host-virus interaction</keyword>
<keyword id="KW-0449">Lipoprotein</keyword>
<keyword id="KW-0472">Membrane</keyword>
<keyword id="KW-0564">Palmitate</keyword>
<keyword id="KW-0732">Signal</keyword>
<keyword id="KW-0812">Transmembrane</keyword>
<keyword id="KW-1133">Transmembrane helix</keyword>
<keyword id="KW-1161">Viral attachment to host cell</keyword>
<keyword id="KW-0261">Viral envelope protein</keyword>
<keyword id="KW-1162">Viral penetration into host cytoplasm</keyword>
<keyword id="KW-0946">Virion</keyword>
<keyword id="KW-0843">Virulence</keyword>
<keyword id="KW-1160">Virus entry into host cell</keyword>
<comment type="function">
    <molecule>Spike protein S1</molecule>
    <text evidence="2">Attaches the virion to the cell membrane by interacting with host receptor, initiating the infection.</text>
</comment>
<comment type="function">
    <molecule>Spike protein S2</molecule>
    <text evidence="2">Mediates fusion of the virion and cellular membranes by acting as a class I viral fusion protein. Under the current model, the protein has at least three conformational states: pre-fusion native state, pre-hairpin intermediate state, and post-fusion hairpin state. During viral and target cell membrane fusion, the coiled coil regions (heptad repeats) assume a trimer-of-hairpins structure, positioning the fusion peptide in close proximity to the C-terminal region of the ectodomain. The formation of this structure appears to drive apposition and subsequent fusion of viral and target cell membranes.</text>
</comment>
<comment type="function">
    <molecule>Spike protein S2'</molecule>
    <text evidence="2">Acts as a viral fusion peptide which is unmasked following S2 cleavage occurring upon virus endocytosis.</text>
</comment>
<comment type="subunit">
    <text evidence="2">Homotrimer; each monomer consists of a S1 and a S2 subunit. The resulting peplomers protrude from the virus surface as spikes.</text>
</comment>
<comment type="subcellular location">
    <subcellularLocation>
        <location evidence="2">Virion membrane</location>
        <topology evidence="2">Single-pass type I membrane protein</topology>
    </subcellularLocation>
    <subcellularLocation>
        <location evidence="2">Host endoplasmic reticulum-Golgi intermediate compartment membrane</location>
        <topology evidence="2">Single-pass type I membrane protein</topology>
    </subcellularLocation>
    <subcellularLocation>
        <location evidence="2">Host cell membrane</location>
        <topology evidence="2">Single-pass type I membrane protein</topology>
    </subcellularLocation>
    <text evidence="2">Accumulates in the endoplasmic reticulum-Golgi intermediate compartment, where it participates in virus particle assembly. Some S oligomers are transported to the host plasma membrane, where they may mediate cell-cell fusion.</text>
</comment>
<comment type="domain">
    <text evidence="2">Fusion peptide 1 (FP1) and fusion peptide 2 (FP2) function cooperatively and have a membrane-ordering effect on lipid headgroups and shallow hydrophobic regions of target bilayers. They are considered as two domains of an extended, bipartite FP. The membrane-ordering activity is calcium-dependent and also dependent on correct folding, which is maintained by an internal disulfide bond in FP2.</text>
</comment>
<comment type="PTM">
    <text evidence="2">Specific enzymatic cleavages in vivo yield mature proteins. The precursor is processed into S1 and S2 by host cell furin or another cellular protease to yield the mature S1 and S2 proteins. Additionally, a second cleavage leads to the release of a fusion peptide after viral attachment to host cell receptor.</text>
</comment>
<comment type="PTM">
    <text evidence="2">The cytoplasmic Cys-rich domain is palmitoylated. Spike glycoprotein is digested within host endosomes.</text>
</comment>
<comment type="similarity">
    <text evidence="2">Belongs to the betacoronaviruses spike protein family.</text>
</comment>
<accession>P25192</accession>
<accession>Q9QAS2</accession>
<organism>
    <name type="scientific">Bovine coronavirus (strain LY-138)</name>
    <name type="common">BCoV</name>
    <name type="synonym">BCV</name>
    <dbReference type="NCBI Taxonomy" id="11131"/>
    <lineage>
        <taxon>Viruses</taxon>
        <taxon>Riboviria</taxon>
        <taxon>Orthornavirae</taxon>
        <taxon>Pisuviricota</taxon>
        <taxon>Pisoniviricetes</taxon>
        <taxon>Nidovirales</taxon>
        <taxon>Cornidovirineae</taxon>
        <taxon>Coronaviridae</taxon>
        <taxon>Orthocoronavirinae</taxon>
        <taxon>Betacoronavirus</taxon>
        <taxon>Embecovirus</taxon>
        <taxon>Betacoronavirus 1</taxon>
    </lineage>
</organism>
<dbReference type="EMBL" id="AF058942">
    <property type="protein sequence ID" value="AAF25499.1"/>
    <property type="molecule type" value="Genomic_RNA"/>
</dbReference>
<dbReference type="PIR" id="C40320">
    <property type="entry name" value="VGIHLY"/>
</dbReference>
<dbReference type="SMR" id="P25192"/>
<dbReference type="GlyCosmos" id="P25192">
    <property type="glycosylation" value="18 sites, No reported glycans"/>
</dbReference>
<dbReference type="GO" id="GO:0044173">
    <property type="term" value="C:host cell endoplasmic reticulum-Golgi intermediate compartment membrane"/>
    <property type="evidence" value="ECO:0007669"/>
    <property type="project" value="UniProtKB-SubCell"/>
</dbReference>
<dbReference type="GO" id="GO:0020002">
    <property type="term" value="C:host cell plasma membrane"/>
    <property type="evidence" value="ECO:0007669"/>
    <property type="project" value="UniProtKB-SubCell"/>
</dbReference>
<dbReference type="GO" id="GO:0016020">
    <property type="term" value="C:membrane"/>
    <property type="evidence" value="ECO:0007669"/>
    <property type="project" value="UniProtKB-UniRule"/>
</dbReference>
<dbReference type="GO" id="GO:0019031">
    <property type="term" value="C:viral envelope"/>
    <property type="evidence" value="ECO:0007669"/>
    <property type="project" value="UniProtKB-UniRule"/>
</dbReference>
<dbReference type="GO" id="GO:0055036">
    <property type="term" value="C:virion membrane"/>
    <property type="evidence" value="ECO:0007669"/>
    <property type="project" value="UniProtKB-SubCell"/>
</dbReference>
<dbReference type="GO" id="GO:0075509">
    <property type="term" value="P:endocytosis involved in viral entry into host cell"/>
    <property type="evidence" value="ECO:0007669"/>
    <property type="project" value="UniProtKB-UniRule"/>
</dbReference>
<dbReference type="GO" id="GO:0039654">
    <property type="term" value="P:fusion of virus membrane with host endosome membrane"/>
    <property type="evidence" value="ECO:0007669"/>
    <property type="project" value="UniProtKB-UniRule"/>
</dbReference>
<dbReference type="GO" id="GO:0019064">
    <property type="term" value="P:fusion of virus membrane with host plasma membrane"/>
    <property type="evidence" value="ECO:0007669"/>
    <property type="project" value="UniProtKB-UniRule"/>
</dbReference>
<dbReference type="GO" id="GO:0046813">
    <property type="term" value="P:receptor-mediated virion attachment to host cell"/>
    <property type="evidence" value="ECO:0007669"/>
    <property type="project" value="UniProtKB-UniRule"/>
</dbReference>
<dbReference type="CDD" id="cd21485">
    <property type="entry name" value="HCoV-OC43-like_Spike_S1_RBD"/>
    <property type="match status" value="1"/>
</dbReference>
<dbReference type="CDD" id="cd22380">
    <property type="entry name" value="HKU1-CoV-like_Spike_SD1-2_S1-S2_S2"/>
    <property type="match status" value="1"/>
</dbReference>
<dbReference type="CDD" id="cd21625">
    <property type="entry name" value="MHV-like_Spike_S1_NTD"/>
    <property type="match status" value="1"/>
</dbReference>
<dbReference type="FunFam" id="1.20.5.300:FF:000003">
    <property type="entry name" value="Spike glycoprotein"/>
    <property type="match status" value="1"/>
</dbReference>
<dbReference type="FunFam" id="1.20.5.300:FF:000006">
    <property type="entry name" value="Spike glycoprotein"/>
    <property type="match status" value="1"/>
</dbReference>
<dbReference type="FunFam" id="2.60.120.960:FF:000002">
    <property type="entry name" value="Spike glycoprotein"/>
    <property type="match status" value="1"/>
</dbReference>
<dbReference type="FunFam" id="3.30.70.1840:FF:000003">
    <property type="entry name" value="Spike glycoprotein"/>
    <property type="match status" value="1"/>
</dbReference>
<dbReference type="Gene3D" id="1.20.5.300">
    <property type="match status" value="2"/>
</dbReference>
<dbReference type="Gene3D" id="3.30.70.1840">
    <property type="match status" value="1"/>
</dbReference>
<dbReference type="Gene3D" id="2.60.120.960">
    <property type="entry name" value="Spike glycoprotein, N-terminal domain"/>
    <property type="match status" value="1"/>
</dbReference>
<dbReference type="HAMAP" id="MF_04099">
    <property type="entry name" value="BETA_CORONA_SPIKE"/>
    <property type="match status" value="1"/>
</dbReference>
<dbReference type="InterPro" id="IPR032500">
    <property type="entry name" value="bCoV_S1_N"/>
</dbReference>
<dbReference type="InterPro" id="IPR042578">
    <property type="entry name" value="BETA_CORONA_SPIKE"/>
</dbReference>
<dbReference type="InterPro" id="IPR043607">
    <property type="entry name" value="CoV_S1_C"/>
</dbReference>
<dbReference type="InterPro" id="IPR043473">
    <property type="entry name" value="S2_sf_CoV"/>
</dbReference>
<dbReference type="InterPro" id="IPR043002">
    <property type="entry name" value="Spike_N_sf"/>
</dbReference>
<dbReference type="InterPro" id="IPR044339">
    <property type="entry name" value="Spike_S1_NTD_MHV-like"/>
</dbReference>
<dbReference type="InterPro" id="IPR018548">
    <property type="entry name" value="Spike_S1_RBD_bCoV"/>
</dbReference>
<dbReference type="InterPro" id="IPR044372">
    <property type="entry name" value="Spike_S1_RBD_HCoV-OC43-like"/>
</dbReference>
<dbReference type="InterPro" id="IPR036326">
    <property type="entry name" value="Spike_S1_RBD_sf_bCoV"/>
</dbReference>
<dbReference type="InterPro" id="IPR002552">
    <property type="entry name" value="Spike_S2_CoV"/>
</dbReference>
<dbReference type="InterPro" id="IPR043614">
    <property type="entry name" value="Spike_S2_CoV_C"/>
</dbReference>
<dbReference type="InterPro" id="IPR044873">
    <property type="entry name" value="Spike_S2_CoV_HR1"/>
</dbReference>
<dbReference type="InterPro" id="IPR044874">
    <property type="entry name" value="Spike_S2_CoV_HR2"/>
</dbReference>
<dbReference type="Pfam" id="PF16451">
    <property type="entry name" value="bCoV_S1_N"/>
    <property type="match status" value="1"/>
</dbReference>
<dbReference type="Pfam" id="PF09408">
    <property type="entry name" value="bCoV_S1_RBD"/>
    <property type="match status" value="1"/>
</dbReference>
<dbReference type="Pfam" id="PF19209">
    <property type="entry name" value="CoV_S1_C"/>
    <property type="match status" value="1"/>
</dbReference>
<dbReference type="Pfam" id="PF01601">
    <property type="entry name" value="CoV_S2"/>
    <property type="match status" value="1"/>
</dbReference>
<dbReference type="Pfam" id="PF19214">
    <property type="entry name" value="CoV_S2_C"/>
    <property type="match status" value="1"/>
</dbReference>
<dbReference type="SUPFAM" id="SSF111474">
    <property type="entry name" value="Coronavirus S2 glycoprotein"/>
    <property type="match status" value="2"/>
</dbReference>
<dbReference type="SUPFAM" id="SSF143587">
    <property type="entry name" value="SARS receptor-binding domain-like"/>
    <property type="match status" value="1"/>
</dbReference>
<dbReference type="PROSITE" id="PS51921">
    <property type="entry name" value="BCOV_S1_CTD"/>
    <property type="match status" value="1"/>
</dbReference>
<dbReference type="PROSITE" id="PS51922">
    <property type="entry name" value="BCOV_S1_NTD"/>
    <property type="match status" value="1"/>
</dbReference>
<dbReference type="PROSITE" id="PS51923">
    <property type="entry name" value="COV_S2_HR1"/>
    <property type="match status" value="1"/>
</dbReference>
<dbReference type="PROSITE" id="PS51924">
    <property type="entry name" value="COV_S2_HR2"/>
    <property type="match status" value="1"/>
</dbReference>